<evidence type="ECO:0000255" key="1">
    <source>
        <dbReference type="HAMAP-Rule" id="MF_01590"/>
    </source>
</evidence>
<gene>
    <name evidence="1" type="primary">cmoB</name>
    <name type="ordered locus">HD_1632</name>
</gene>
<proteinExistence type="inferred from homology"/>
<keyword id="KW-1185">Reference proteome</keyword>
<keyword id="KW-0808">Transferase</keyword>
<keyword id="KW-0819">tRNA processing</keyword>
<reference key="1">
    <citation type="submission" date="2003-06" db="EMBL/GenBank/DDBJ databases">
        <title>The complete genome sequence of Haemophilus ducreyi.</title>
        <authorList>
            <person name="Munson R.S. Jr."/>
            <person name="Ray W.C."/>
            <person name="Mahairas G."/>
            <person name="Sabo P."/>
            <person name="Mungur R."/>
            <person name="Johnson L."/>
            <person name="Nguyen D."/>
            <person name="Wang J."/>
            <person name="Forst C."/>
            <person name="Hood L."/>
        </authorList>
    </citation>
    <scope>NUCLEOTIDE SEQUENCE [LARGE SCALE GENOMIC DNA]</scope>
    <source>
        <strain>35000HP / ATCC 700724</strain>
    </source>
</reference>
<protein>
    <recommendedName>
        <fullName evidence="1">tRNA U34 carboxymethyltransferase</fullName>
        <ecNumber evidence="1">2.5.1.-</ecNumber>
    </recommendedName>
</protein>
<accession>Q7VL50</accession>
<sequence length="320" mass="36515">MIDFRPFYQQIATSHLSAWLETLPLQLKQWEKTAHSDYAKWAKIATSMPTSPTSINLTDKVEAVLAEALPEGEKQYLIYRLKQLMPWRKGPYHLHGVHIDTEWRSDFKWQRVLPHLAPLKDRTILDVGCGNGYHMWRMVGEDAQMVVGIDPTELFLCQFEAVRQLLGNDRRANLIPLGLEQMQPLAAFDTVFSMGVLYHRKSPLDHLSQLKAQLVKGGELVLETLIIDGDINDILTPADRYAKMKNVYFIPSVAALINWLKKIGFKNARCVDQSVTTLAEQRKTEWLENESLVDFLDPTDQRKTIEGLPAPKRAVILANA</sequence>
<dbReference type="EC" id="2.5.1.-" evidence="1"/>
<dbReference type="EMBL" id="AE017143">
    <property type="protein sequence ID" value="AAP96409.1"/>
    <property type="molecule type" value="Genomic_DNA"/>
</dbReference>
<dbReference type="RefSeq" id="WP_010945441.1">
    <property type="nucleotide sequence ID" value="NC_002940.2"/>
</dbReference>
<dbReference type="SMR" id="Q7VL50"/>
<dbReference type="STRING" id="233412.HD_1632"/>
<dbReference type="KEGG" id="hdu:HD_1632"/>
<dbReference type="eggNOG" id="COG0500">
    <property type="taxonomic scope" value="Bacteria"/>
</dbReference>
<dbReference type="HOGENOM" id="CLU_052665_0_0_6"/>
<dbReference type="OrthoDB" id="9773188at2"/>
<dbReference type="Proteomes" id="UP000001022">
    <property type="component" value="Chromosome"/>
</dbReference>
<dbReference type="GO" id="GO:0008168">
    <property type="term" value="F:methyltransferase activity"/>
    <property type="evidence" value="ECO:0007669"/>
    <property type="project" value="TreeGrafter"/>
</dbReference>
<dbReference type="GO" id="GO:0016765">
    <property type="term" value="F:transferase activity, transferring alkyl or aryl (other than methyl) groups"/>
    <property type="evidence" value="ECO:0007669"/>
    <property type="project" value="UniProtKB-UniRule"/>
</dbReference>
<dbReference type="GO" id="GO:0002098">
    <property type="term" value="P:tRNA wobble uridine modification"/>
    <property type="evidence" value="ECO:0007669"/>
    <property type="project" value="InterPro"/>
</dbReference>
<dbReference type="CDD" id="cd02440">
    <property type="entry name" value="AdoMet_MTases"/>
    <property type="match status" value="1"/>
</dbReference>
<dbReference type="Gene3D" id="3.40.50.150">
    <property type="entry name" value="Vaccinia Virus protein VP39"/>
    <property type="match status" value="1"/>
</dbReference>
<dbReference type="HAMAP" id="MF_01590">
    <property type="entry name" value="tRNA_carboxymethyltr_CmoB"/>
    <property type="match status" value="1"/>
</dbReference>
<dbReference type="InterPro" id="IPR010017">
    <property type="entry name" value="CmoB"/>
</dbReference>
<dbReference type="InterPro" id="IPR027555">
    <property type="entry name" value="Mo5U34_MeTrfas-like"/>
</dbReference>
<dbReference type="InterPro" id="IPR029063">
    <property type="entry name" value="SAM-dependent_MTases_sf"/>
</dbReference>
<dbReference type="NCBIfam" id="NF011650">
    <property type="entry name" value="PRK15068.1"/>
    <property type="match status" value="1"/>
</dbReference>
<dbReference type="NCBIfam" id="TIGR00452">
    <property type="entry name" value="tRNA 5-methoxyuridine(34)/uridine 5-oxyacetic acid(34) synthase CmoB"/>
    <property type="match status" value="1"/>
</dbReference>
<dbReference type="PANTHER" id="PTHR43464">
    <property type="entry name" value="METHYLTRANSFERASE"/>
    <property type="match status" value="1"/>
</dbReference>
<dbReference type="PANTHER" id="PTHR43464:SF95">
    <property type="entry name" value="TRNA U34 CARBOXYMETHYLTRANSFERASE"/>
    <property type="match status" value="1"/>
</dbReference>
<dbReference type="Pfam" id="PF08003">
    <property type="entry name" value="Methyltransf_9"/>
    <property type="match status" value="1"/>
</dbReference>
<dbReference type="SUPFAM" id="SSF53335">
    <property type="entry name" value="S-adenosyl-L-methionine-dependent methyltransferases"/>
    <property type="match status" value="1"/>
</dbReference>
<name>CMOB_HAEDU</name>
<feature type="chain" id="PRO_0000313921" description="tRNA U34 carboxymethyltransferase">
    <location>
        <begin position="1"/>
        <end position="320"/>
    </location>
</feature>
<feature type="binding site" evidence="1">
    <location>
        <position position="89"/>
    </location>
    <ligand>
        <name>carboxy-S-adenosyl-L-methionine</name>
        <dbReference type="ChEBI" id="CHEBI:134278"/>
    </ligand>
</feature>
<feature type="binding site" evidence="1">
    <location>
        <position position="103"/>
    </location>
    <ligand>
        <name>carboxy-S-adenosyl-L-methionine</name>
        <dbReference type="ChEBI" id="CHEBI:134278"/>
    </ligand>
</feature>
<feature type="binding site" evidence="1">
    <location>
        <position position="108"/>
    </location>
    <ligand>
        <name>carboxy-S-adenosyl-L-methionine</name>
        <dbReference type="ChEBI" id="CHEBI:134278"/>
    </ligand>
</feature>
<feature type="binding site" evidence="1">
    <location>
        <position position="128"/>
    </location>
    <ligand>
        <name>carboxy-S-adenosyl-L-methionine</name>
        <dbReference type="ChEBI" id="CHEBI:134278"/>
    </ligand>
</feature>
<feature type="binding site" evidence="1">
    <location>
        <begin position="150"/>
        <end position="152"/>
    </location>
    <ligand>
        <name>carboxy-S-adenosyl-L-methionine</name>
        <dbReference type="ChEBI" id="CHEBI:134278"/>
    </ligand>
</feature>
<feature type="binding site" evidence="1">
    <location>
        <begin position="179"/>
        <end position="180"/>
    </location>
    <ligand>
        <name>carboxy-S-adenosyl-L-methionine</name>
        <dbReference type="ChEBI" id="CHEBI:134278"/>
    </ligand>
</feature>
<feature type="binding site" evidence="1">
    <location>
        <position position="194"/>
    </location>
    <ligand>
        <name>carboxy-S-adenosyl-L-methionine</name>
        <dbReference type="ChEBI" id="CHEBI:134278"/>
    </ligand>
</feature>
<feature type="binding site" evidence="1">
    <location>
        <position position="198"/>
    </location>
    <ligand>
        <name>carboxy-S-adenosyl-L-methionine</name>
        <dbReference type="ChEBI" id="CHEBI:134278"/>
    </ligand>
</feature>
<feature type="binding site" evidence="1">
    <location>
        <position position="313"/>
    </location>
    <ligand>
        <name>carboxy-S-adenosyl-L-methionine</name>
        <dbReference type="ChEBI" id="CHEBI:134278"/>
    </ligand>
</feature>
<organism>
    <name type="scientific">Haemophilus ducreyi (strain 35000HP / ATCC 700724)</name>
    <dbReference type="NCBI Taxonomy" id="233412"/>
    <lineage>
        <taxon>Bacteria</taxon>
        <taxon>Pseudomonadati</taxon>
        <taxon>Pseudomonadota</taxon>
        <taxon>Gammaproteobacteria</taxon>
        <taxon>Pasteurellales</taxon>
        <taxon>Pasteurellaceae</taxon>
        <taxon>Haemophilus</taxon>
    </lineage>
</organism>
<comment type="function">
    <text evidence="1">Catalyzes carboxymethyl transfer from carboxy-S-adenosyl-L-methionine (Cx-SAM) to 5-hydroxyuridine (ho5U) to form 5-carboxymethoxyuridine (cmo5U) at position 34 in tRNAs.</text>
</comment>
<comment type="catalytic activity">
    <reaction evidence="1">
        <text>carboxy-S-adenosyl-L-methionine + 5-hydroxyuridine(34) in tRNA = 5-carboxymethoxyuridine(34) in tRNA + S-adenosyl-L-homocysteine + H(+)</text>
        <dbReference type="Rhea" id="RHEA:52848"/>
        <dbReference type="Rhea" id="RHEA-COMP:13381"/>
        <dbReference type="Rhea" id="RHEA-COMP:13383"/>
        <dbReference type="ChEBI" id="CHEBI:15378"/>
        <dbReference type="ChEBI" id="CHEBI:57856"/>
        <dbReference type="ChEBI" id="CHEBI:134278"/>
        <dbReference type="ChEBI" id="CHEBI:136877"/>
        <dbReference type="ChEBI" id="CHEBI:136879"/>
    </reaction>
</comment>
<comment type="subunit">
    <text evidence="1">Homotetramer.</text>
</comment>
<comment type="similarity">
    <text evidence="1">Belongs to the class I-like SAM-binding methyltransferase superfamily. CmoB family.</text>
</comment>